<sequence>MNSTPRNAQAPSHRECFLPSVARTPSVTKVTPAKKITFLKRGDPRFAGVRLAVHQRAFKTFSALMDELSQRVPLSFGVRSVTTPRGLHSLSALEQLEDGGCYLCSDKKPPKTPSGPGRPQERNPTAQQLRDVEGQREAPGTSSSRKSLKTPRRILLIKNMDPRLQQTVVLSHRNTRNLAAFLGKASDLLRFPVKQLYTTSGKKVDSLQALLHSPSVLVCAGHEAFRTPAMKNARRSEAETLSGLTSRNKNGSWGPKTKPSVIHSRSPPGSTPRLPERPGPSNPPVGPAPGRHPQDTPAQSGPLVAGDDMKKKVRMNEDGSLSVEMKVRFHLVGEDTLLWSRRMGRASALTAASGEDPVLGEVDPLCCVWEGYPWGFSEPGVWGPRPCRVGCREVFGRGGQPGPKYEIWTNPLHASQGERVAARKRWGLAQHVRCSGLWGHGTAGRERCSQDSASPASSTGLPEGSEPESSCCPRTPEDGVDSASPSAQIGAERKAGGSLGEDPGLCIDGAGLGGPEQGGRLTPRARSEEGASSDSSASTGSHEGSSEWGGRPQGCPGKARAETSQQEASEGGDPASPALSLSSLRSDDLQAETQGQGTEQATGAAVTREPLVLGLSCSWDSEGASSTPSTCTSSQQGQRRHRSRASAMSSPSSPGLGRVAPRGHPRHSHYRKDTHSPLDSSVTKQVPRPPERRRACQDGSVPRYSGSSSSTRTQASGNLRPPSSGSLPSQDLLGTSSATVTPAVHSDFVSGVSPHNAPSAGWAGDAGSRTCSPAPIPPHTSDSCSKSGAASLGEEARDTPQPSSPLVLQVGRPEQGAVGPHRSHCCSQPGTQPAQEAQRGPSPEASWLCGRYCPTPPRGRPCPQRRSSSCGSTGSSHQSTARGPGGSPQEGTRQPGPTPSPGPNSGASRRSSASQGAGSRGLSEEKTLRSGGGPQGQEEASGVSPSSLPRSSPEAVVREWLDNIPEEPILMTYELADETTGAAGGGLRGPEVDPGDDHSLEGLGEPAQAGQQSLEGDPGQDPEPEGALLGSSDTGPQSGEGVPQGAAPEGVSEAPAEAGADREAPAGCRVSLRALPGRVSASTQIMRALMGSKQGRPSSVPEVSRPMARRLSCSAGALITCLASLQLFEEDLGSPASKVRFKDSPRYQELLSISKDLWPGCDVGEDQLDSGLWELTWSQALPDLGSHAMTENFTPTSSSGVDISSGSGGSGESSVPCAMDGTLVTQGTELPLKTSNQRPDSRTYESPGDLENQQQCCFPTFLNARACACATNEDEAERDSEEQRASSNLEQLAENTVQEEVQLEETKEGTEGEGLQEEAVQLEETKTEEGLQEEGVQLEETKETEGEGQQEEEAQLEEIEETGGEGLQEEGVQLEEVKEGPEGGLQGEALEEGLKEEGLPEEGSVHGQELSEASSPDGKGSQEDDPVQEEEAGRASASAEPCPAEGTEEPTEPPSHLSETDPSASERQSGSQLEPGLEKPPGATMMGQEHTQAQPTQGAAERSSSVACSAALDCDPIWVSVLLKKTEKAFLAHLASAVAELRARWGLQDNDLLDQMAAELQQDVAQRLQDSTKRELQKLQGRAGRMVLEPPREALTGELLLQTQQRRHRLRGLRNLSAFSERTLGLGPLSFTLEDEPALSTALGSQLGEEAEGEEFCPCEACVRKKVSPMSPKATMGATRGPIKEAFDLQQILQRKRGEHTDGEAAEVAPGKTHTDPTSTRTVQGAEGGLGPGLSQGPGVDEGEDGEGSQRLNRDKDPKLGEAEGDAMAQEREGKTHNSETSAGSELGEAEQEGEGISERGETGGQGSGHEDNLQGEAAAGGDQDPGQSDGAEGIEAPEAEGEAQPESEGVEAPEAEGDAQEAEGEAQPESEDVEAPEAEGEAQPESEDVETPEAEWEVQPESEGAEAPEAEKEAQPETESVEALETEGEDEPESEGAEAQEAEEAAQEAEGQTQPESEVIESQEAEEEAQPESEDVEALEVEVETQEAEGEAQPESEDVEAPEAEGEMQEAEEEAQPESDGVEAQPKSEGEEAQEVEGETQKTEGDAQPESDGVEAPEAEEEAQEAEGEVQEAEGEAHPESEDVDAQEAEGEAQPESEGVEAPEAEGEAQKAEGIEAPETEGEAQPESEGIEAPEAEGEAQPESEGVEAQDAEGEAQPESEGIEAQEAEEEAQPELEGVEAPEAEGEAQPESEGIEAPEAEGEAQPELEGVEAPEAEEEAQPEPEGVETPEAEGEAQPESEGETQGEKKGSPQVSLGDGQSEEASESSSPVPEDRPTPPPSPGGDTPHQRPGSQTGPSSSRASSWGNCWQKDSENDHVLGDTRSPDAKSTGTPHAERKATRMYPESSTSEQEEAPLGSRTPEQGASEGYDLQEDQALGSLAPTEAVGRADGFGQDDLDF</sequence>
<proteinExistence type="evidence at protein level"/>
<comment type="function">
    <text evidence="1">Required for the differentiation of photoreceptor cells. Plays a role in the organization of outer segment of rod and cone photoreceptors (By similarity).</text>
</comment>
<comment type="subunit">
    <text evidence="1">Interacts with RP1; has a synergistic effect with RP1 in photoreceptor differentiation.</text>
</comment>
<comment type="subcellular location">
    <subcellularLocation>
        <location>Cytoplasm</location>
        <location>Cytoskeleton</location>
        <location>Cilium axoneme</location>
    </subcellularLocation>
    <subcellularLocation>
        <location evidence="1">Cell projection</location>
        <location evidence="1">Cilium</location>
        <location evidence="1">Photoreceptor outer segment</location>
    </subcellularLocation>
    <text evidence="1">Localized to the axoneme of outer segments and connecting cilia in rod photoreceptors.</text>
</comment>
<comment type="alternative products">
    <event type="alternative splicing"/>
    <isoform>
        <id>Q8IWN7-1</id>
        <name>1</name>
        <sequence type="displayed"/>
    </isoform>
    <isoform>
        <id>Q8IWN7-2</id>
        <name>2</name>
        <sequence type="described" ref="VSP_009382 VSP_009383"/>
    </isoform>
</comment>
<comment type="tissue specificity">
    <text>Retinal-specific; expressed in photoreceptor.</text>
</comment>
<comment type="domain">
    <text>The C-terminal part contains a large repetitive region which contains an unusually high percentage of glutamine, glycine and above all glutamic acid residues.</text>
</comment>
<comment type="polymorphism">
    <text evidence="6">The exact length of RP1L1 is variable between individuals due to the presence of several length polymorphisms. The sequence shown here is that of allele RP1L1-1 and includes 3 repeats (from aa 1292-1342) with a length of 16 amino acids. The number of repeats is highly polymorphic and varies among different alleles, ranging from 3 to 8.</text>
</comment>
<comment type="disease" evidence="7 8 9">
    <disease id="DI-03012">
        <name>Occult macular dystrophy</name>
        <acronym>OCMD</acronym>
        <description>An inherited macular dystrophy characterized by progressive loss of macular function but normal ophthalmoscopic appearance. It is typically characterized by a central cone dysfunction leading to a loss of vision despite normal ophthalmoscopic appearance, normal fluorescein angiography, and normal full-field electroretinogram (ERGs), but the amplitudes of the focal macular ERGs and multifocal ERGs are significantly reduced at the central retina.</description>
        <dbReference type="MIM" id="613587"/>
    </disease>
    <text>The disease is caused by variants affecting the gene represented in this entry.</text>
</comment>
<comment type="disease" evidence="9 10 11">
    <disease id="DI-05776">
        <name>Retinitis pigmentosa 88</name>
        <acronym>RP88</acronym>
        <description>A form of retinitis pigmentosa, a retinal dystrophy belonging to the group of pigmentary retinopathies. Retinitis pigmentosa is characterized by retinal pigment deposits visible on fundus examination and primary loss of rod photoreceptor cells followed by secondary loss of cone photoreceptors. Patients typically have night vision blindness and loss of midperipheral visual field. RP88 is an autosomal recessive form.</description>
        <dbReference type="MIM" id="618826"/>
    </disease>
    <text>The disease may be caused by variants affecting the gene represented in this entry.</text>
</comment>
<comment type="miscellaneous">
    <molecule>Isoform 2</molecule>
    <text evidence="13">May be produced at very low levels due to a premature stop codon in the mRNA, leading to nonsense-mediated mRNA decay.</text>
</comment>
<name>RP1L1_HUMAN</name>
<accession>Q8IWN7</accession>
<accession>A6NKC6</accession>
<accession>Q86SQ1</accession>
<accession>Q8IWN8</accession>
<accession>Q8IWN9</accession>
<accession>Q8IWP0</accession>
<accession>Q8IWP1</accession>
<accession>Q8IWP2</accession>
<feature type="chain" id="PRO_0000097406" description="Retinitis pigmentosa 1-like 1 protein">
    <location>
        <begin position="1"/>
        <end position="2400"/>
    </location>
</feature>
<feature type="domain" description="Doublecortin 1" evidence="3">
    <location>
        <begin position="34"/>
        <end position="118"/>
    </location>
</feature>
<feature type="domain" description="Doublecortin 2" evidence="3">
    <location>
        <begin position="152"/>
        <end position="231"/>
    </location>
</feature>
<feature type="repeat" description="1-1; approximate">
    <location>
        <begin position="1292"/>
        <end position="1307"/>
    </location>
</feature>
<feature type="repeat" description="1-2; approximate">
    <location>
        <begin position="1310"/>
        <end position="1326"/>
    </location>
</feature>
<feature type="repeat" description="1-3">
    <location>
        <begin position="1327"/>
        <end position="1342"/>
    </location>
</feature>
<feature type="repeat" description="2-1">
    <location>
        <begin position="1836"/>
        <end position="1851"/>
    </location>
</feature>
<feature type="repeat" description="2-2">
    <location>
        <begin position="1852"/>
        <end position="1867"/>
    </location>
</feature>
<feature type="repeat" description="2-3">
    <location>
        <begin position="1875"/>
        <end position="1890"/>
    </location>
</feature>
<feature type="repeat" description="2-4; approximate">
    <location>
        <begin position="1891"/>
        <end position="1906"/>
    </location>
</feature>
<feature type="repeat" description="2-5">
    <location>
        <begin position="1907"/>
        <end position="1921"/>
    </location>
</feature>
<feature type="repeat" description="2-6; approximate">
    <location>
        <begin position="1923"/>
        <end position="1938"/>
    </location>
</feature>
<feature type="repeat" description="2-7">
    <location>
        <begin position="1939"/>
        <end position="1954"/>
    </location>
</feature>
<feature type="repeat" description="2-8; approximate">
    <location>
        <begin position="1955"/>
        <end position="1970"/>
    </location>
</feature>
<feature type="repeat" description="2-9; approximate">
    <location>
        <begin position="1971"/>
        <end position="1984"/>
    </location>
</feature>
<feature type="repeat" description="2-10">
    <location>
        <begin position="1985"/>
        <end position="2000"/>
    </location>
</feature>
<feature type="repeat" description="2-11">
    <location>
        <begin position="2001"/>
        <end position="2016"/>
    </location>
</feature>
<feature type="repeat" description="2-12; approximate">
    <location>
        <begin position="2017"/>
        <end position="2031"/>
    </location>
</feature>
<feature type="repeat" description="2-13d">
    <location>
        <begin position="2033"/>
        <end position="2048"/>
    </location>
</feature>
<feature type="repeat" description="2-14">
    <location>
        <begin position="2056"/>
        <end position="2071"/>
    </location>
</feature>
<feature type="repeat" description="2-15; approximate">
    <location>
        <begin position="2072"/>
        <end position="2085"/>
    </location>
</feature>
<feature type="repeat" description="2-16">
    <location>
        <begin position="2086"/>
        <end position="2101"/>
    </location>
</feature>
<feature type="repeat" description="2-17">
    <location>
        <begin position="2102"/>
        <end position="2116"/>
    </location>
</feature>
<feature type="repeat" description="2-18">
    <location>
        <begin position="2117"/>
        <end position="2132"/>
    </location>
</feature>
<feature type="repeat" description="2-19">
    <location>
        <begin position="2133"/>
        <end position="2148"/>
    </location>
</feature>
<feature type="repeat" description="2-20">
    <location>
        <begin position="2149"/>
        <end position="2164"/>
    </location>
</feature>
<feature type="repeat" description="2-21">
    <location>
        <begin position="2165"/>
        <end position="2180"/>
    </location>
</feature>
<feature type="repeat" description="2-22">
    <location>
        <begin position="2181"/>
        <end position="2196"/>
    </location>
</feature>
<feature type="repeat" description="2-23">
    <location>
        <begin position="2197"/>
        <end position="2212"/>
    </location>
</feature>
<feature type="repeat" description="2-24">
    <location>
        <begin position="2213"/>
        <end position="2228"/>
    </location>
</feature>
<feature type="repeat" description="2-25">
    <location>
        <begin position="2229"/>
        <end position="2244"/>
    </location>
</feature>
<feature type="region of interest" description="Disordered" evidence="4">
    <location>
        <begin position="104"/>
        <end position="152"/>
    </location>
</feature>
<feature type="region of interest" description="Disordered" evidence="4">
    <location>
        <begin position="230"/>
        <end position="310"/>
    </location>
</feature>
<feature type="region of interest" description="Disordered" evidence="4">
    <location>
        <begin position="444"/>
        <end position="1064"/>
    </location>
</feature>
<feature type="region of interest" description="Disordered" evidence="4">
    <location>
        <begin position="1188"/>
        <end position="1251"/>
    </location>
</feature>
<feature type="region of interest" description="Disordered" evidence="4">
    <location>
        <begin position="1275"/>
        <end position="1501"/>
    </location>
</feature>
<feature type="region of interest" description="3 X 16 AA approximate tandem repeats of T-E-E-G-L-Q-E-E-G-V-Q-L-E-E-T-K">
    <location>
        <begin position="1292"/>
        <end position="1342"/>
    </location>
</feature>
<feature type="region of interest" description="Disordered" evidence="4">
    <location>
        <begin position="1697"/>
        <end position="2400"/>
    </location>
</feature>
<feature type="region of interest" description="25 X 16 AA approximate tandem repeats of [ED]-[AT]-[PQ]-[ED]-[AVT]-E-[GKE]-[ED]-[AMT]-Q-[EPK]-[EAT]-[TSELP]-[EG]-[EGSQDI]-[AVIE]">
    <location>
        <begin position="1836"/>
        <end position="2244"/>
    </location>
</feature>
<feature type="coiled-coil region" evidence="2">
    <location>
        <begin position="1934"/>
        <end position="2017"/>
    </location>
</feature>
<feature type="coiled-coil region" evidence="2">
    <location>
        <begin position="2054"/>
        <end position="2081"/>
    </location>
</feature>
<feature type="compositionally biased region" description="Polar residues" evidence="4">
    <location>
        <begin position="242"/>
        <end position="251"/>
    </location>
</feature>
<feature type="compositionally biased region" description="Pro residues" evidence="4">
    <location>
        <begin position="277"/>
        <end position="287"/>
    </location>
</feature>
<feature type="compositionally biased region" description="Polar residues" evidence="4">
    <location>
        <begin position="450"/>
        <end position="460"/>
    </location>
</feature>
<feature type="compositionally biased region" description="Low complexity" evidence="4">
    <location>
        <begin position="530"/>
        <end position="543"/>
    </location>
</feature>
<feature type="compositionally biased region" description="Low complexity" evidence="4">
    <location>
        <begin position="573"/>
        <end position="584"/>
    </location>
</feature>
<feature type="compositionally biased region" description="Polar residues" evidence="4">
    <location>
        <begin position="591"/>
        <end position="601"/>
    </location>
</feature>
<feature type="compositionally biased region" description="Low complexity" evidence="4">
    <location>
        <begin position="625"/>
        <end position="637"/>
    </location>
</feature>
<feature type="compositionally biased region" description="Low complexity" evidence="4">
    <location>
        <begin position="645"/>
        <end position="654"/>
    </location>
</feature>
<feature type="compositionally biased region" description="Basic residues" evidence="4">
    <location>
        <begin position="661"/>
        <end position="670"/>
    </location>
</feature>
<feature type="compositionally biased region" description="Polar residues" evidence="4">
    <location>
        <begin position="711"/>
        <end position="740"/>
    </location>
</feature>
<feature type="compositionally biased region" description="Polar residues" evidence="4">
    <location>
        <begin position="825"/>
        <end position="835"/>
    </location>
</feature>
<feature type="compositionally biased region" description="Low complexity" evidence="4">
    <location>
        <begin position="864"/>
        <end position="880"/>
    </location>
</feature>
<feature type="compositionally biased region" description="Low complexity" evidence="4">
    <location>
        <begin position="903"/>
        <end position="921"/>
    </location>
</feature>
<feature type="compositionally biased region" description="Low complexity" evidence="4">
    <location>
        <begin position="941"/>
        <end position="953"/>
    </location>
</feature>
<feature type="compositionally biased region" description="Polar residues" evidence="4">
    <location>
        <begin position="1223"/>
        <end position="1238"/>
    </location>
</feature>
<feature type="compositionally biased region" description="Polar residues" evidence="4">
    <location>
        <begin position="1285"/>
        <end position="1299"/>
    </location>
</feature>
<feature type="compositionally biased region" description="Acidic residues" evidence="4">
    <location>
        <begin position="1346"/>
        <end position="1363"/>
    </location>
</feature>
<feature type="compositionally biased region" description="Low complexity" evidence="4">
    <location>
        <begin position="1434"/>
        <end position="1445"/>
    </location>
</feature>
<feature type="compositionally biased region" description="Polar residues" evidence="4">
    <location>
        <begin position="1460"/>
        <end position="1472"/>
    </location>
</feature>
<feature type="compositionally biased region" description="Polar residues" evidence="4">
    <location>
        <begin position="1489"/>
        <end position="1501"/>
    </location>
</feature>
<feature type="compositionally biased region" description="Gly residues" evidence="4">
    <location>
        <begin position="1726"/>
        <end position="1736"/>
    </location>
</feature>
<feature type="compositionally biased region" description="Basic and acidic residues" evidence="4">
    <location>
        <begin position="1752"/>
        <end position="1762"/>
    </location>
</feature>
<feature type="compositionally biased region" description="Basic and acidic residues" evidence="4">
    <location>
        <begin position="1769"/>
        <end position="1778"/>
    </location>
</feature>
<feature type="compositionally biased region" description="Acidic residues" evidence="4">
    <location>
        <begin position="1836"/>
        <end position="1909"/>
    </location>
</feature>
<feature type="compositionally biased region" description="Acidic residues" evidence="4">
    <location>
        <begin position="1920"/>
        <end position="1948"/>
    </location>
</feature>
<feature type="compositionally biased region" description="Low complexity" evidence="4">
    <location>
        <begin position="1949"/>
        <end position="1958"/>
    </location>
</feature>
<feature type="compositionally biased region" description="Acidic residues" evidence="4">
    <location>
        <begin position="1959"/>
        <end position="2022"/>
    </location>
</feature>
<feature type="compositionally biased region" description="Acidic residues" evidence="4">
    <location>
        <begin position="2048"/>
        <end position="2075"/>
    </location>
</feature>
<feature type="compositionally biased region" description="Acidic residues" evidence="4">
    <location>
        <begin position="2083"/>
        <end position="2108"/>
    </location>
</feature>
<feature type="compositionally biased region" description="Acidic residues" evidence="4">
    <location>
        <begin position="2117"/>
        <end position="2245"/>
    </location>
</feature>
<feature type="compositionally biased region" description="Polar residues" evidence="4">
    <location>
        <begin position="2292"/>
        <end position="2308"/>
    </location>
</feature>
<feature type="compositionally biased region" description="Basic and acidic residues" evidence="4">
    <location>
        <begin position="2312"/>
        <end position="2327"/>
    </location>
</feature>
<feature type="splice variant" id="VSP_009382" description="In isoform 2." evidence="12">
    <original>DSLQALLHSPSVLVCAGH</original>
    <variation>LPDMKFHQRSAEWRMEVD</variation>
    <location>
        <begin position="205"/>
        <end position="222"/>
    </location>
</feature>
<feature type="splice variant" id="VSP_009383" description="In isoform 2." evidence="12">
    <location>
        <begin position="223"/>
        <end position="2400"/>
    </location>
</feature>
<feature type="sequence variant" id="VAR_083926" description="In RP88; uncertain significance; dbSNP:rs748984657." evidence="10">
    <original>P</original>
    <variation>H</variation>
    <location>
        <position position="19"/>
    </location>
</feature>
<feature type="sequence variant" id="VAR_017700" description="In dbSNP:rs140397694.">
    <original>P</original>
    <variation>A</variation>
    <location>
        <position position="44"/>
    </location>
</feature>
<feature type="sequence variant" id="VAR_065126" description="In OCMD; dbSNP:rs267607017." evidence="7 9">
    <original>R</original>
    <variation>W</variation>
    <location>
        <position position="45"/>
    </location>
</feature>
<feature type="sequence variant" id="VAR_017701" description="In dbSNP:rs150931842.">
    <original>R</original>
    <variation>C</variation>
    <location>
        <position position="56"/>
    </location>
</feature>
<feature type="sequence variant" id="VAR_017702" description="In dbSNP:rs6601495.">
    <original>T</original>
    <variation>S</variation>
    <location>
        <position position="112"/>
    </location>
</feature>
<feature type="sequence variant" id="VAR_017703" description="In dbSNP:rs189960401.">
    <original>R</original>
    <variation>H</variation>
    <location>
        <position position="136"/>
    </location>
</feature>
<feature type="sequence variant" id="VAR_083927" description="In RP88; uncertain significance; dbSNP:rs200213603." evidence="9">
    <original>R</original>
    <variation>Q</variation>
    <location>
        <position position="152"/>
    </location>
</feature>
<feature type="sequence variant" id="VAR_056979" description="In dbSNP:rs4388421.">
    <original>H</original>
    <variation>P</variation>
    <location>
        <position position="222"/>
    </location>
</feature>
<feature type="sequence variant" id="VAR_083928" description="In RP88; uncertain significance." evidence="9">
    <location>
        <begin position="369"/>
        <end position="2400"/>
    </location>
</feature>
<feature type="sequence variant" id="VAR_017704" description="In dbSNP:rs74400517.">
    <original>A</original>
    <variation>V</variation>
    <location>
        <position position="487"/>
    </location>
</feature>
<feature type="sequence variant" id="VAR_080211" description="In dbSNP:rs74990397." evidence="5">
    <original>G</original>
    <variation>S</variation>
    <location>
        <position position="514"/>
    </location>
</feature>
<feature type="sequence variant" id="VAR_017705" description="In dbSNP:rs141846905.">
    <original>A</original>
    <variation>T</variation>
    <location>
        <position position="624"/>
    </location>
</feature>
<feature type="sequence variant" id="VAR_017706" description="In dbSNP:rs35602868." evidence="6">
    <original>L</original>
    <variation>P</variation>
    <location>
        <position position="792"/>
    </location>
</feature>
<feature type="sequence variant" id="VAR_017707" description="In dbSNP:rs199746022.">
    <original>E</original>
    <variation>K</variation>
    <location>
        <position position="795"/>
    </location>
</feature>
<feature type="sequence variant" id="VAR_017708" description="In dbSNP:rs62490856.">
    <original>R</original>
    <variation>W</variation>
    <location>
        <position position="860"/>
    </location>
</feature>
<feature type="sequence variant" id="VAR_083929" description="In OCMD; uncertain significance; dbSNP:rs201968725." evidence="9">
    <original>R</original>
    <variation>H</variation>
    <location>
        <position position="950"/>
    </location>
</feature>
<feature type="sequence variant" id="VAR_065127" description="In OCMD; dbSNP:rs267607018." evidence="7">
    <original>W</original>
    <variation>R</variation>
    <location>
        <position position="960"/>
    </location>
</feature>
<feature type="sequence variant" id="VAR_083930" description="In RP88; uncertain significance." evidence="9">
    <location>
        <begin position="1008"/>
        <end position="2400"/>
    </location>
</feature>
<feature type="sequence variant" id="VAR_017709" description="In dbSNP:rs4840502." evidence="6">
    <original>R</original>
    <variation>W</variation>
    <location>
        <position position="1146"/>
    </location>
</feature>
<feature type="sequence variant" id="VAR_068350" description="In OCMD; uncertain significance; dbSNP:rs863225442." evidence="8">
    <original>S</original>
    <variation>C</variation>
    <location>
        <position position="1199"/>
    </location>
</feature>
<feature type="sequence variant" id="VAR_083931" description="In OCMD; uncertain significance; dbSNP:rs964723839." evidence="9">
    <original>G</original>
    <variation>D</variation>
    <location>
        <position position="1200"/>
    </location>
</feature>
<feature type="sequence variant" id="VAR_017710" description="In allele RP1L1-3." evidence="6">
    <original>A</original>
    <variation>S</variation>
    <location>
        <position position="1285"/>
    </location>
</feature>
<feature type="sequence variant" id="VAR_080215" description="In allele RP1L1-2." evidence="6">
    <original>E</original>
    <variation>EGVQLEETKTEEGLQEE</variation>
    <location>
        <position position="1313"/>
    </location>
</feature>
<feature type="sequence variant" id="VAR_080212" description="In allele RP1L1-3." evidence="6">
    <original>E</original>
    <variation>EGVQLEETKTEEGLQEEGVQLEETKTEEGLQEE</variation>
    <location>
        <position position="1313"/>
    </location>
</feature>
<feature type="sequence variant" id="VAR_080216" description="In allele RP1L1-4." evidence="6">
    <original>E</original>
    <variation>EGVQLEETKTEEGLQEEGVQLEETKTEEGLQEEGVQLEETKTEEGLQEE</variation>
    <location>
        <position position="1313"/>
    </location>
</feature>
<feature type="sequence variant" id="VAR_080214" description="In allele RP1L1-5." evidence="6">
    <original>E</original>
    <variation>EGVQLEETKTEEGLQEEGVQLEETKTEEGLQEEGVQLEETKTEEGLQEEGVQLEETKTEEGLQEE</variation>
    <location>
        <position position="1313"/>
    </location>
</feature>
<feature type="sequence variant" id="VAR_080213" description="In allele RP1L1-6." evidence="6">
    <original>E</original>
    <variation>EGVQLEETKTEEGLQEEGVQLEETKTEEGLQEEGVQLEETKTEEGLQEEGVQLEETKTEEGLQEEGVQLEETKTEEGLQEE</variation>
    <location>
        <position position="1313"/>
    </location>
</feature>
<feature type="sequence variant" id="VAR_080217" description="In dbSNP:rs4840501." evidence="5 6">
    <original>A</original>
    <variation>G</variation>
    <location>
        <position position="1319"/>
    </location>
</feature>
<feature type="sequence variant" id="VAR_017712" description="In allele RP1L1-3; dbSNP:rs4240659.">
    <original>E</original>
    <variation>G</variation>
    <location>
        <position position="1324"/>
    </location>
</feature>
<feature type="sequence variant" id="VAR_017713" description="In allele RP1L1-3; dbSNP:rs386722178.">
    <original>TE</original>
    <variation>VI</variation>
    <location>
        <begin position="1327"/>
        <end position="1328"/>
    </location>
</feature>
<feature type="sequence variant" id="VAR_017715" description="In allele RP1L1-2 and allele RP1L1-3; dbSNP:rs61503212.">
    <original>G</original>
    <variation>R</variation>
    <location>
        <position position="1335"/>
    </location>
</feature>
<feature type="sequence variant" id="VAR_047388" description="In dbSNP:rs4840498." evidence="6">
    <original>R</original>
    <variation>S</variation>
    <location>
        <position position="1467"/>
    </location>
</feature>
<feature type="sequence variant" id="VAR_017721" description="In dbSNP:rs62490855.">
    <original>A</original>
    <variation>V</variation>
    <location>
        <position position="1483"/>
    </location>
</feature>
<feature type="sequence variant" id="VAR_017722" description="In dbSNP:rs4841399.">
    <original>P</original>
    <variation>R</variation>
    <location>
        <position position="1495"/>
    </location>
</feature>
<feature type="sequence variant" id="VAR_017723" description="In dbSNP:rs202068070.">
    <original>S</original>
    <variation>L</variation>
    <location>
        <position position="1505"/>
    </location>
</feature>
<feature type="sequence variant" id="VAR_017724">
    <original>K</original>
    <variation>KK</variation>
    <location>
        <position position="1578"/>
    </location>
</feature>
<feature type="sequence variant" id="VAR_017725" description="In dbSNP:rs13267180.">
    <original>A</original>
    <variation>V</variation>
    <location>
        <position position="1709"/>
    </location>
</feature>
<feature type="sequence variant" id="VAR_017726" description="In dbSNP:rs79019225.">
    <original>G</original>
    <variation>D</variation>
    <location>
        <position position="1816"/>
    </location>
</feature>
<feature type="sequence variant" id="VAR_083932" description="In RP88; uncertain significance." evidence="10">
    <location>
        <begin position="1824"/>
        <end position="2400"/>
    </location>
</feature>
<feature type="sequence variant" id="VAR_017727">
    <location>
        <begin position="1862"/>
        <end position="1868"/>
    </location>
</feature>
<feature type="sequence variant" id="VAR_017728" description="In dbSNP:rs28446662.">
    <original>D</original>
    <variation>V</variation>
    <location>
        <position position="1889"/>
    </location>
</feature>
<feature type="sequence variant" id="VAR_017729" description="In dbSNP:rs11785822." evidence="6">
    <original>A</original>
    <variation>E</variation>
    <location>
        <position position="1946"/>
    </location>
</feature>
<feature type="sequence variant" id="VAR_017730" description="In dbSNP:rs11783478." evidence="6">
    <original>T</original>
    <variation>A</variation>
    <location>
        <position position="1954"/>
    </location>
</feature>
<feature type="sequence variant" id="VAR_083933" description="In RP88; uncertain significance." evidence="9">
    <location>
        <begin position="1987"/>
        <end position="2400"/>
    </location>
</feature>
<feature type="sequence variant" id="VAR_017731">
    <original>G</original>
    <variation>V</variation>
    <location>
        <position position="2069"/>
    </location>
</feature>
<feature type="sequence variant" id="VAR_017732" description="In dbSNP:rs11778341.">
    <original>Q</original>
    <variation>H</variation>
    <location>
        <position position="2088"/>
    </location>
</feature>
<feature type="sequence variant" id="VAR_056981" description="In dbSNP:rs1182974647.">
    <original>E</original>
    <variation>K</variation>
    <location>
        <position position="2091"/>
    </location>
</feature>
<feature type="sequence variant" id="VAR_017733" description="In dbSNP:rs72494282.">
    <original>E</original>
    <variation>K</variation>
    <location>
        <position position="2140"/>
    </location>
</feature>
<feature type="sequence variant" id="VAR_017734" description="In dbSNP:rs4354268." evidence="6">
    <original>E</original>
    <variation>K</variation>
    <location>
        <position position="2171"/>
    </location>
</feature>
<feature type="sequence variant" id="VAR_017735" description="In dbSNP:rs75797924.">
    <original>P</original>
    <variation>L</variation>
    <location>
        <position position="2199"/>
    </location>
</feature>
<feature type="sequence variant" id="VAR_017736" evidence="6">
    <original>E</original>
    <variation>G</variation>
    <location>
        <position position="2242"/>
    </location>
</feature>
<feature type="sequence variant" id="VAR_017737" description="In dbSNP:rs55642448.">
    <original>G</original>
    <variation>R</variation>
    <location>
        <position position="2285"/>
    </location>
</feature>
<feature type="sequence variant" id="VAR_017738" description="In dbSNP:rs117007660.">
    <original>H</original>
    <variation>R</variation>
    <location>
        <position position="2335"/>
    </location>
</feature>
<protein>
    <recommendedName>
        <fullName>Retinitis pigmentosa 1-like 1 protein</fullName>
    </recommendedName>
</protein>
<dbReference type="EMBL" id="AY168341">
    <property type="protein sequence ID" value="AAN86959.1"/>
    <property type="molecule type" value="mRNA"/>
</dbReference>
<dbReference type="EMBL" id="AY168342">
    <property type="protein sequence ID" value="AAN86960.1"/>
    <property type="molecule type" value="mRNA"/>
</dbReference>
<dbReference type="EMBL" id="AY168343">
    <property type="protein sequence ID" value="AAN86961.1"/>
    <property type="molecule type" value="mRNA"/>
</dbReference>
<dbReference type="EMBL" id="AY168344">
    <property type="protein sequence ID" value="AAN86962.1"/>
    <property type="molecule type" value="mRNA"/>
</dbReference>
<dbReference type="EMBL" id="AY168345">
    <property type="protein sequence ID" value="AAN86963.1"/>
    <property type="molecule type" value="mRNA"/>
</dbReference>
<dbReference type="EMBL" id="AY168346">
    <property type="protein sequence ID" value="AAN86964.1"/>
    <property type="molecule type" value="mRNA"/>
</dbReference>
<dbReference type="EMBL" id="AJ491324">
    <property type="protein sequence ID" value="CAD36957.1"/>
    <property type="molecule type" value="mRNA"/>
</dbReference>
<dbReference type="EMBL" id="AK127545">
    <property type="status" value="NOT_ANNOTATED_CDS"/>
    <property type="molecule type" value="mRNA"/>
</dbReference>
<dbReference type="EMBL" id="AC104964">
    <property type="status" value="NOT_ANNOTATED_CDS"/>
    <property type="molecule type" value="Genomic_DNA"/>
</dbReference>
<dbReference type="EMBL" id="AC105001">
    <property type="status" value="NOT_ANNOTATED_CDS"/>
    <property type="molecule type" value="Genomic_DNA"/>
</dbReference>
<dbReference type="CCDS" id="CCDS43708.1">
    <molecule id="Q8IWN7-1"/>
</dbReference>
<dbReference type="RefSeq" id="NP_849188.4">
    <molecule id="Q8IWN7-1"/>
    <property type="nucleotide sequence ID" value="NM_178857.5"/>
</dbReference>
<dbReference type="SMR" id="Q8IWN7"/>
<dbReference type="FunCoup" id="Q8IWN7">
    <property type="interactions" value="9"/>
</dbReference>
<dbReference type="IntAct" id="Q8IWN7">
    <property type="interactions" value="4"/>
</dbReference>
<dbReference type="MINT" id="Q8IWN7"/>
<dbReference type="STRING" id="9606.ENSP00000371923"/>
<dbReference type="GlyGen" id="Q8IWN7">
    <property type="glycosylation" value="8 sites, 1 O-linked glycan (4 sites)"/>
</dbReference>
<dbReference type="iPTMnet" id="Q8IWN7"/>
<dbReference type="MetOSite" id="Q8IWN7"/>
<dbReference type="PhosphoSitePlus" id="Q8IWN7"/>
<dbReference type="SwissPalm" id="Q8IWN7"/>
<dbReference type="BioMuta" id="RP1L1"/>
<dbReference type="DMDM" id="317373543"/>
<dbReference type="jPOST" id="Q8IWN7"/>
<dbReference type="MassIVE" id="Q8IWN7"/>
<dbReference type="PaxDb" id="9606-ENSP00000371923"/>
<dbReference type="PeptideAtlas" id="Q8IWN7"/>
<dbReference type="ProteomicsDB" id="1400"/>
<dbReference type="ProteomicsDB" id="70874">
    <molecule id="Q8IWN7-1"/>
</dbReference>
<dbReference type="ProteomicsDB" id="70875">
    <molecule id="Q8IWN7-2"/>
</dbReference>
<dbReference type="Antibodypedia" id="77523">
    <property type="antibodies" value="8 antibodies from 4 providers"/>
</dbReference>
<dbReference type="DNASU" id="94137"/>
<dbReference type="Ensembl" id="ENST00000382483.4">
    <molecule id="Q8IWN7-1"/>
    <property type="protein sequence ID" value="ENSP00000371923.3"/>
    <property type="gene ID" value="ENSG00000183638.6"/>
</dbReference>
<dbReference type="GeneID" id="94137"/>
<dbReference type="KEGG" id="hsa:94137"/>
<dbReference type="MANE-Select" id="ENST00000382483.4">
    <property type="protein sequence ID" value="ENSP00000371923.3"/>
    <property type="RefSeq nucleotide sequence ID" value="NM_178857.6"/>
    <property type="RefSeq protein sequence ID" value="NP_849188.4"/>
</dbReference>
<dbReference type="AGR" id="HGNC:15946"/>
<dbReference type="CTD" id="94137"/>
<dbReference type="DisGeNET" id="94137"/>
<dbReference type="GeneCards" id="RP1L1"/>
<dbReference type="HGNC" id="HGNC:15946">
    <property type="gene designation" value="RP1L1"/>
</dbReference>
<dbReference type="HPA" id="ENSG00000183638">
    <property type="expression patterns" value="Tissue enriched (retina)"/>
</dbReference>
<dbReference type="MalaCards" id="RP1L1"/>
<dbReference type="MIM" id="608581">
    <property type="type" value="gene"/>
</dbReference>
<dbReference type="MIM" id="613587">
    <property type="type" value="phenotype"/>
</dbReference>
<dbReference type="MIM" id="618826">
    <property type="type" value="phenotype"/>
</dbReference>
<dbReference type="neXtProt" id="NX_Q8IWN7"/>
<dbReference type="OpenTargets" id="ENSG00000183638"/>
<dbReference type="Orphanet" id="247834">
    <property type="disease" value="Occult macular dystrophy"/>
</dbReference>
<dbReference type="Orphanet" id="791">
    <property type="disease" value="Retinitis pigmentosa"/>
</dbReference>
<dbReference type="PharmGKB" id="PA34640"/>
<dbReference type="VEuPathDB" id="HostDB:ENSG00000183638"/>
<dbReference type="eggNOG" id="KOG3757">
    <property type="taxonomic scope" value="Eukaryota"/>
</dbReference>
<dbReference type="GeneTree" id="ENSGT00940000154242"/>
<dbReference type="InParanoid" id="Q8IWN7"/>
<dbReference type="OMA" id="MSHSSCE"/>
<dbReference type="OrthoDB" id="1738954at2759"/>
<dbReference type="PAN-GO" id="Q8IWN7">
    <property type="GO annotations" value="4 GO annotations based on evolutionary models"/>
</dbReference>
<dbReference type="PhylomeDB" id="Q8IWN7"/>
<dbReference type="TreeFam" id="TF318770"/>
<dbReference type="PathwayCommons" id="Q8IWN7"/>
<dbReference type="SignaLink" id="Q8IWN7"/>
<dbReference type="BioGRID-ORCS" id="94137">
    <property type="hits" value="11 hits in 1142 CRISPR screens"/>
</dbReference>
<dbReference type="ChiTaRS" id="RP1L1">
    <property type="organism name" value="human"/>
</dbReference>
<dbReference type="GenomeRNAi" id="94137"/>
<dbReference type="Pharos" id="Q8IWN7">
    <property type="development level" value="Tbio"/>
</dbReference>
<dbReference type="PRO" id="PR:Q8IWN7"/>
<dbReference type="Proteomes" id="UP000005640">
    <property type="component" value="Chromosome 8"/>
</dbReference>
<dbReference type="RNAct" id="Q8IWN7">
    <property type="molecule type" value="protein"/>
</dbReference>
<dbReference type="Bgee" id="ENSG00000183638">
    <property type="expression patterns" value="Expressed in primordial germ cell in gonad and 22 other cell types or tissues"/>
</dbReference>
<dbReference type="GO" id="GO:0005930">
    <property type="term" value="C:axoneme"/>
    <property type="evidence" value="ECO:0000250"/>
    <property type="project" value="UniProtKB"/>
</dbReference>
<dbReference type="GO" id="GO:0005874">
    <property type="term" value="C:microtubule"/>
    <property type="evidence" value="ECO:0007669"/>
    <property type="project" value="UniProtKB-KW"/>
</dbReference>
<dbReference type="GO" id="GO:0032391">
    <property type="term" value="C:photoreceptor connecting cilium"/>
    <property type="evidence" value="ECO:0000250"/>
    <property type="project" value="UniProtKB"/>
</dbReference>
<dbReference type="GO" id="GO:0001750">
    <property type="term" value="C:photoreceptor outer segment"/>
    <property type="evidence" value="ECO:0000250"/>
    <property type="project" value="UniProtKB"/>
</dbReference>
<dbReference type="GO" id="GO:0035082">
    <property type="term" value="P:axoneme assembly"/>
    <property type="evidence" value="ECO:0000318"/>
    <property type="project" value="GO_Central"/>
</dbReference>
<dbReference type="GO" id="GO:0035556">
    <property type="term" value="P:intracellular signal transduction"/>
    <property type="evidence" value="ECO:0007669"/>
    <property type="project" value="InterPro"/>
</dbReference>
<dbReference type="GO" id="GO:0042461">
    <property type="term" value="P:photoreceptor cell development"/>
    <property type="evidence" value="ECO:0000250"/>
    <property type="project" value="UniProtKB"/>
</dbReference>
<dbReference type="GO" id="GO:0045494">
    <property type="term" value="P:photoreceptor cell maintenance"/>
    <property type="evidence" value="ECO:0000315"/>
    <property type="project" value="BHF-UCL"/>
</dbReference>
<dbReference type="GO" id="GO:0060041">
    <property type="term" value="P:retina development in camera-type eye"/>
    <property type="evidence" value="ECO:0000318"/>
    <property type="project" value="GO_Central"/>
</dbReference>
<dbReference type="GO" id="GO:0007601">
    <property type="term" value="P:visual perception"/>
    <property type="evidence" value="ECO:0007669"/>
    <property type="project" value="UniProtKB-KW"/>
</dbReference>
<dbReference type="CDD" id="cd17146">
    <property type="entry name" value="DCX1_RP1L1"/>
    <property type="match status" value="1"/>
</dbReference>
<dbReference type="CDD" id="cd17148">
    <property type="entry name" value="DCX2_RP1L1"/>
    <property type="match status" value="1"/>
</dbReference>
<dbReference type="FunFam" id="3.10.20.230:FF:000008">
    <property type="entry name" value="retinitis pigmentosa 1-like 1 protein"/>
    <property type="match status" value="1"/>
</dbReference>
<dbReference type="FunFam" id="3.10.20.230:FF:000010">
    <property type="entry name" value="Retinitis pigmentosa 1-like 1a"/>
    <property type="match status" value="1"/>
</dbReference>
<dbReference type="Gene3D" id="3.10.20.230">
    <property type="entry name" value="Doublecortin domain"/>
    <property type="match status" value="2"/>
</dbReference>
<dbReference type="InterPro" id="IPR003533">
    <property type="entry name" value="Doublecortin_dom"/>
</dbReference>
<dbReference type="InterPro" id="IPR036572">
    <property type="entry name" value="Doublecortin_dom_sf"/>
</dbReference>
<dbReference type="PANTHER" id="PTHR23005">
    <property type="entry name" value="RETINITIS PIGMENTOSA 1 PROTEIN"/>
    <property type="match status" value="1"/>
</dbReference>
<dbReference type="PANTHER" id="PTHR23005:SF3">
    <property type="entry name" value="RETINITIS PIGMENTOSA 1-LIKE 1 PROTEIN"/>
    <property type="match status" value="1"/>
</dbReference>
<dbReference type="Pfam" id="PF03607">
    <property type="entry name" value="DCX"/>
    <property type="match status" value="2"/>
</dbReference>
<dbReference type="SMART" id="SM00537">
    <property type="entry name" value="DCX"/>
    <property type="match status" value="2"/>
</dbReference>
<dbReference type="SUPFAM" id="SSF89837">
    <property type="entry name" value="Doublecortin (DC)"/>
    <property type="match status" value="2"/>
</dbReference>
<dbReference type="PROSITE" id="PS50309">
    <property type="entry name" value="DC"/>
    <property type="match status" value="2"/>
</dbReference>
<reference key="1">
    <citation type="journal article" date="2003" name="Mol. Vis.">
        <title>Characterization of RP1L1, a highly polymorphic paralog of the retinitis pigmentosa 1 (RP1) gene.</title>
        <authorList>
            <person name="Bowne S.J."/>
            <person name="Daiger S.P."/>
            <person name="Malone K.A."/>
            <person name="Heckenlively J.R."/>
            <person name="Kennan A."/>
            <person name="Humphries P."/>
            <person name="Hughbanks-Wheaton D."/>
            <person name="Birch D.G."/>
            <person name="Liu Q."/>
            <person name="Pierce E.A."/>
            <person name="Zuo J."/>
            <person name="Huang Q."/>
            <person name="Donovan D.D."/>
            <person name="Sullivan L.S."/>
        </authorList>
    </citation>
    <scope>NUCLEOTIDE SEQUENCE [MRNA] (ALLELES RP1L1-1; RP1L1-2; RP1L1-3; RP1L1-4; RP1L1-5 AND RP1L1-6; ISOFORM 1)</scope>
    <scope>VARIANTS PRO-792; TRP-1146; SER-1285; GLY-1319; SER-1467; GLU-1946; ALA-1954; LYS-2171 AND GLY-2242</scope>
    <scope>POLYMORPHISM</scope>
</reference>
<reference key="2">
    <citation type="journal article" date="2003" name="Eur. J. Hum. Genet.">
        <title>Identification and characterization of the retinitis pigmentosa 1-like1 gene (rp1l1): a novel candidate for retinal degenerations.</title>
        <authorList>
            <person name="Conte I."/>
            <person name="Lestingi M."/>
            <person name="den Hollander A."/>
            <person name="Alfano G."/>
            <person name="Ziviello C."/>
            <person name="Pugliese M."/>
            <person name="Circolo D."/>
            <person name="Caccioppoli C."/>
            <person name="Ciccodicola A."/>
            <person name="Banfi S."/>
        </authorList>
    </citation>
    <scope>NUCLEOTIDE SEQUENCE [MRNA] (ALLELE RP1L1-5; ISOFORM 1)</scope>
    <scope>VARIANTS SER-514 AND GLY-1319</scope>
    <source>
        <tissue>Retina</tissue>
    </source>
</reference>
<reference key="3">
    <citation type="journal article" date="2004" name="Nat. Genet.">
        <title>Complete sequencing and characterization of 21,243 full-length human cDNAs.</title>
        <authorList>
            <person name="Ota T."/>
            <person name="Suzuki Y."/>
            <person name="Nishikawa T."/>
            <person name="Otsuki T."/>
            <person name="Sugiyama T."/>
            <person name="Irie R."/>
            <person name="Wakamatsu A."/>
            <person name="Hayashi K."/>
            <person name="Sato H."/>
            <person name="Nagai K."/>
            <person name="Kimura K."/>
            <person name="Makita H."/>
            <person name="Sekine M."/>
            <person name="Obayashi M."/>
            <person name="Nishi T."/>
            <person name="Shibahara T."/>
            <person name="Tanaka T."/>
            <person name="Ishii S."/>
            <person name="Yamamoto J."/>
            <person name="Saito K."/>
            <person name="Kawai Y."/>
            <person name="Isono Y."/>
            <person name="Nakamura Y."/>
            <person name="Nagahari K."/>
            <person name="Murakami K."/>
            <person name="Yasuda T."/>
            <person name="Iwayanagi T."/>
            <person name="Wagatsuma M."/>
            <person name="Shiratori A."/>
            <person name="Sudo H."/>
            <person name="Hosoiri T."/>
            <person name="Kaku Y."/>
            <person name="Kodaira H."/>
            <person name="Kondo H."/>
            <person name="Sugawara M."/>
            <person name="Takahashi M."/>
            <person name="Kanda K."/>
            <person name="Yokoi T."/>
            <person name="Furuya T."/>
            <person name="Kikkawa E."/>
            <person name="Omura Y."/>
            <person name="Abe K."/>
            <person name="Kamihara K."/>
            <person name="Katsuta N."/>
            <person name="Sato K."/>
            <person name="Tanikawa M."/>
            <person name="Yamazaki M."/>
            <person name="Ninomiya K."/>
            <person name="Ishibashi T."/>
            <person name="Yamashita H."/>
            <person name="Murakawa K."/>
            <person name="Fujimori K."/>
            <person name="Tanai H."/>
            <person name="Kimata M."/>
            <person name="Watanabe M."/>
            <person name="Hiraoka S."/>
            <person name="Chiba Y."/>
            <person name="Ishida S."/>
            <person name="Ono Y."/>
            <person name="Takiguchi S."/>
            <person name="Watanabe S."/>
            <person name="Yosida M."/>
            <person name="Hotuta T."/>
            <person name="Kusano J."/>
            <person name="Kanehori K."/>
            <person name="Takahashi-Fujii A."/>
            <person name="Hara H."/>
            <person name="Tanase T.-O."/>
            <person name="Nomura Y."/>
            <person name="Togiya S."/>
            <person name="Komai F."/>
            <person name="Hara R."/>
            <person name="Takeuchi K."/>
            <person name="Arita M."/>
            <person name="Imose N."/>
            <person name="Musashino K."/>
            <person name="Yuuki H."/>
            <person name="Oshima A."/>
            <person name="Sasaki N."/>
            <person name="Aotsuka S."/>
            <person name="Yoshikawa Y."/>
            <person name="Matsunawa H."/>
            <person name="Ichihara T."/>
            <person name="Shiohata N."/>
            <person name="Sano S."/>
            <person name="Moriya S."/>
            <person name="Momiyama H."/>
            <person name="Satoh N."/>
            <person name="Takami S."/>
            <person name="Terashima Y."/>
            <person name="Suzuki O."/>
            <person name="Nakagawa S."/>
            <person name="Senoh A."/>
            <person name="Mizoguchi H."/>
            <person name="Goto Y."/>
            <person name="Shimizu F."/>
            <person name="Wakebe H."/>
            <person name="Hishigaki H."/>
            <person name="Watanabe T."/>
            <person name="Sugiyama A."/>
            <person name="Takemoto M."/>
            <person name="Kawakami B."/>
            <person name="Yamazaki M."/>
            <person name="Watanabe K."/>
            <person name="Kumagai A."/>
            <person name="Itakura S."/>
            <person name="Fukuzumi Y."/>
            <person name="Fujimori Y."/>
            <person name="Komiyama M."/>
            <person name="Tashiro H."/>
            <person name="Tanigami A."/>
            <person name="Fujiwara T."/>
            <person name="Ono T."/>
            <person name="Yamada K."/>
            <person name="Fujii Y."/>
            <person name="Ozaki K."/>
            <person name="Hirao M."/>
            <person name="Ohmori Y."/>
            <person name="Kawabata A."/>
            <person name="Hikiji T."/>
            <person name="Kobatake N."/>
            <person name="Inagaki H."/>
            <person name="Ikema Y."/>
            <person name="Okamoto S."/>
            <person name="Okitani R."/>
            <person name="Kawakami T."/>
            <person name="Noguchi S."/>
            <person name="Itoh T."/>
            <person name="Shigeta K."/>
            <person name="Senba T."/>
            <person name="Matsumura K."/>
            <person name="Nakajima Y."/>
            <person name="Mizuno T."/>
            <person name="Morinaga M."/>
            <person name="Sasaki M."/>
            <person name="Togashi T."/>
            <person name="Oyama M."/>
            <person name="Hata H."/>
            <person name="Watanabe M."/>
            <person name="Komatsu T."/>
            <person name="Mizushima-Sugano J."/>
            <person name="Satoh T."/>
            <person name="Shirai Y."/>
            <person name="Takahashi Y."/>
            <person name="Nakagawa K."/>
            <person name="Okumura K."/>
            <person name="Nagase T."/>
            <person name="Nomura N."/>
            <person name="Kikuchi H."/>
            <person name="Masuho Y."/>
            <person name="Yamashita R."/>
            <person name="Nakai K."/>
            <person name="Yada T."/>
            <person name="Nakamura Y."/>
            <person name="Ohara O."/>
            <person name="Isogai T."/>
            <person name="Sugano S."/>
        </authorList>
    </citation>
    <scope>NUCLEOTIDE SEQUENCE [LARGE SCALE MRNA] (ISOFORM 2)</scope>
    <source>
        <tissue>Colon</tissue>
    </source>
</reference>
<reference key="4">
    <citation type="journal article" date="2006" name="Nature">
        <title>DNA sequence and analysis of human chromosome 8.</title>
        <authorList>
            <person name="Nusbaum C."/>
            <person name="Mikkelsen T.S."/>
            <person name="Zody M.C."/>
            <person name="Asakawa S."/>
            <person name="Taudien S."/>
            <person name="Garber M."/>
            <person name="Kodira C.D."/>
            <person name="Schueler M.G."/>
            <person name="Shimizu A."/>
            <person name="Whittaker C.A."/>
            <person name="Chang J.L."/>
            <person name="Cuomo C.A."/>
            <person name="Dewar K."/>
            <person name="FitzGerald M.G."/>
            <person name="Yang X."/>
            <person name="Allen N.R."/>
            <person name="Anderson S."/>
            <person name="Asakawa T."/>
            <person name="Blechschmidt K."/>
            <person name="Bloom T."/>
            <person name="Borowsky M.L."/>
            <person name="Butler J."/>
            <person name="Cook A."/>
            <person name="Corum B."/>
            <person name="DeArellano K."/>
            <person name="DeCaprio D."/>
            <person name="Dooley K.T."/>
            <person name="Dorris L. III"/>
            <person name="Engels R."/>
            <person name="Gloeckner G."/>
            <person name="Hafez N."/>
            <person name="Hagopian D.S."/>
            <person name="Hall J.L."/>
            <person name="Ishikawa S.K."/>
            <person name="Jaffe D.B."/>
            <person name="Kamat A."/>
            <person name="Kudoh J."/>
            <person name="Lehmann R."/>
            <person name="Lokitsang T."/>
            <person name="Macdonald P."/>
            <person name="Major J.E."/>
            <person name="Matthews C.D."/>
            <person name="Mauceli E."/>
            <person name="Menzel U."/>
            <person name="Mihalev A.H."/>
            <person name="Minoshima S."/>
            <person name="Murayama Y."/>
            <person name="Naylor J.W."/>
            <person name="Nicol R."/>
            <person name="Nguyen C."/>
            <person name="O'Leary S.B."/>
            <person name="O'Neill K."/>
            <person name="Parker S.C.J."/>
            <person name="Polley A."/>
            <person name="Raymond C.K."/>
            <person name="Reichwald K."/>
            <person name="Rodriguez J."/>
            <person name="Sasaki T."/>
            <person name="Schilhabel M."/>
            <person name="Siddiqui R."/>
            <person name="Smith C.L."/>
            <person name="Sneddon T.P."/>
            <person name="Talamas J.A."/>
            <person name="Tenzin P."/>
            <person name="Topham K."/>
            <person name="Venkataraman V."/>
            <person name="Wen G."/>
            <person name="Yamazaki S."/>
            <person name="Young S.K."/>
            <person name="Zeng Q."/>
            <person name="Zimmer A.R."/>
            <person name="Rosenthal A."/>
            <person name="Birren B.W."/>
            <person name="Platzer M."/>
            <person name="Shimizu N."/>
            <person name="Lander E.S."/>
        </authorList>
    </citation>
    <scope>NUCLEOTIDE SEQUENCE [LARGE SCALE GENOMIC DNA]</scope>
</reference>
<reference key="5">
    <citation type="journal article" date="2010" name="Am. J. Hum. Genet.">
        <title>Dominant mutations in RP1L1 are responsible for occult macular dystrophy.</title>
        <authorList>
            <person name="Akahori M."/>
            <person name="Tsunoda K."/>
            <person name="Miyake Y."/>
            <person name="Fukuda Y."/>
            <person name="Ishiura H."/>
            <person name="Tsuji S."/>
            <person name="Usui T."/>
            <person name="Hatase T."/>
            <person name="Nakamura M."/>
            <person name="Ohde H."/>
            <person name="Itabashi T."/>
            <person name="Okamoto H."/>
            <person name="Takada Y."/>
            <person name="Iwata T."/>
        </authorList>
    </citation>
    <scope>INVOLVEMENT IN OCMD</scope>
    <scope>VARIANTS OCMD TRP-45 AND ARG-960</scope>
</reference>
<reference key="6">
    <citation type="journal article" date="2019" name="Ophthalmic Genet.">
        <title>Novel homozygous loss-of-function mutations in RP1 and RP1L1 genes in retinitis pigmentosa patients.</title>
        <authorList>
            <person name="Albarry M.A."/>
            <person name="Hashmi J.A."/>
            <person name="Alreheli A.Q."/>
            <person name="Albalawi A.M."/>
            <person name="Khan B."/>
            <person name="Ramzan K."/>
            <person name="Basit S."/>
        </authorList>
    </citation>
    <scope>INVOLVEMENT IN RP88</scope>
</reference>
<reference key="7">
    <citation type="journal article" date="2012" name="Mol. Vis.">
        <title>A new mutation in the RP1L1 gene in a patient with occult macular dystrophy associated with a depolarizing pattern of focal macular electroretinograms.</title>
        <authorList>
            <person name="Kabuto T."/>
            <person name="Takahashi H."/>
            <person name="Goto-Fukuura Y."/>
            <person name="Igarashi T."/>
            <person name="Akahori M."/>
            <person name="Kameya S."/>
            <person name="Iwata T."/>
            <person name="Mizota A."/>
            <person name="Yamaki K."/>
            <person name="Miyake Y."/>
            <person name="Takahashi H."/>
        </authorList>
    </citation>
    <scope>VARIANT OCMD CYS-1199</scope>
</reference>
<reference key="8">
    <citation type="journal article" date="2018" name="Invest. Ophthalmol. Vis. Sci.">
        <title>Phenotype variations caused by mutations in the RP1L1 gene in a large mainly German cohort.</title>
        <authorList>
            <person name="Zobor D."/>
            <person name="Zobor G."/>
            <person name="Hipp S."/>
            <person name="Baumann B."/>
            <person name="Weisschuh N."/>
            <person name="Biskup S."/>
            <person name="Sliesoraityte I."/>
            <person name="Zrenner E."/>
            <person name="Kohl S."/>
        </authorList>
    </citation>
    <scope>VARIANTS OCMD TRP-45; HIS-950 AND ASP-1200</scope>
    <scope>VARIANTS RP88 GLN-152; 369-TRP--PHE-2400 DEL; 1008-GLN--PHE-2400 DEL AND 1987-GLN--PHE-2400 DEL</scope>
</reference>
<reference key="9">
    <citation type="journal article" date="2019" name="Int. J. Ophthalmol.">
        <title>Whole-exome sequencing identifies novel mutations in genes responsible for retinitis pigmentosa in 2 nonconsanguineous Chinese families.</title>
        <authorList>
            <person name="Hu Y.S."/>
            <person name="Song H."/>
            <person name="Li Y."/>
            <person name="Xiao Z.Y."/>
            <person name="Li T."/>
        </authorList>
    </citation>
    <scope>VARIANTS RP88 HIS-19 AND 1824-GLN--PHE-2400 DEL</scope>
</reference>
<organism>
    <name type="scientific">Homo sapiens</name>
    <name type="common">Human</name>
    <dbReference type="NCBI Taxonomy" id="9606"/>
    <lineage>
        <taxon>Eukaryota</taxon>
        <taxon>Metazoa</taxon>
        <taxon>Chordata</taxon>
        <taxon>Craniata</taxon>
        <taxon>Vertebrata</taxon>
        <taxon>Euteleostomi</taxon>
        <taxon>Mammalia</taxon>
        <taxon>Eutheria</taxon>
        <taxon>Euarchontoglires</taxon>
        <taxon>Primates</taxon>
        <taxon>Haplorrhini</taxon>
        <taxon>Catarrhini</taxon>
        <taxon>Hominidae</taxon>
        <taxon>Homo</taxon>
    </lineage>
</organism>
<gene>
    <name type="primary">RP1L1</name>
</gene>
<keyword id="KW-0025">Alternative splicing</keyword>
<keyword id="KW-0966">Cell projection</keyword>
<keyword id="KW-0969">Cilium</keyword>
<keyword id="KW-0970">Cilium biogenesis/degradation</keyword>
<keyword id="KW-0175">Coiled coil</keyword>
<keyword id="KW-0963">Cytoplasm</keyword>
<keyword id="KW-0206">Cytoskeleton</keyword>
<keyword id="KW-0225">Disease variant</keyword>
<keyword id="KW-0493">Microtubule</keyword>
<keyword id="KW-1267">Proteomics identification</keyword>
<keyword id="KW-1185">Reference proteome</keyword>
<keyword id="KW-0677">Repeat</keyword>
<keyword id="KW-0682">Retinitis pigmentosa</keyword>
<keyword id="KW-0716">Sensory transduction</keyword>
<keyword id="KW-0844">Vision</keyword>
<evidence type="ECO:0000250" key="1"/>
<evidence type="ECO:0000255" key="2"/>
<evidence type="ECO:0000255" key="3">
    <source>
        <dbReference type="PROSITE-ProRule" id="PRU00072"/>
    </source>
</evidence>
<evidence type="ECO:0000256" key="4">
    <source>
        <dbReference type="SAM" id="MobiDB-lite"/>
    </source>
</evidence>
<evidence type="ECO:0000269" key="5">
    <source>
    </source>
</evidence>
<evidence type="ECO:0000269" key="6">
    <source>
    </source>
</evidence>
<evidence type="ECO:0000269" key="7">
    <source>
    </source>
</evidence>
<evidence type="ECO:0000269" key="8">
    <source>
    </source>
</evidence>
<evidence type="ECO:0000269" key="9">
    <source>
    </source>
</evidence>
<evidence type="ECO:0000269" key="10">
    <source>
    </source>
</evidence>
<evidence type="ECO:0000269" key="11">
    <source>
    </source>
</evidence>
<evidence type="ECO:0000303" key="12">
    <source>
    </source>
</evidence>
<evidence type="ECO:0000305" key="13"/>